<comment type="catalytic activity">
    <reaction evidence="1">
        <text>D-arabinose 5-phosphate + phosphoenolpyruvate + H2O = 3-deoxy-alpha-D-manno-2-octulosonate-8-phosphate + phosphate</text>
        <dbReference type="Rhea" id="RHEA:14053"/>
        <dbReference type="ChEBI" id="CHEBI:15377"/>
        <dbReference type="ChEBI" id="CHEBI:43474"/>
        <dbReference type="ChEBI" id="CHEBI:57693"/>
        <dbReference type="ChEBI" id="CHEBI:58702"/>
        <dbReference type="ChEBI" id="CHEBI:85985"/>
        <dbReference type="EC" id="2.5.1.55"/>
    </reaction>
</comment>
<comment type="pathway">
    <text evidence="1">Carbohydrate biosynthesis; 3-deoxy-D-manno-octulosonate biosynthesis; 3-deoxy-D-manno-octulosonate from D-ribulose 5-phosphate: step 2/3.</text>
</comment>
<comment type="pathway">
    <text evidence="1">Bacterial outer membrane biogenesis; lipopolysaccharide biosynthesis.</text>
</comment>
<comment type="subcellular location">
    <subcellularLocation>
        <location evidence="1">Cytoplasm</location>
    </subcellularLocation>
</comment>
<comment type="similarity">
    <text evidence="1">Belongs to the KdsA family.</text>
</comment>
<keyword id="KW-0963">Cytoplasm</keyword>
<keyword id="KW-0448">Lipopolysaccharide biosynthesis</keyword>
<keyword id="KW-0808">Transferase</keyword>
<proteinExistence type="inferred from homology"/>
<dbReference type="EC" id="2.5.1.55" evidence="1"/>
<dbReference type="EMBL" id="CP000863">
    <property type="protein sequence ID" value="ACC57320.1"/>
    <property type="molecule type" value="Genomic_DNA"/>
</dbReference>
<dbReference type="RefSeq" id="WP_000080538.1">
    <property type="nucleotide sequence ID" value="NZ_CP031380.1"/>
</dbReference>
<dbReference type="SMR" id="B2I2A6"/>
<dbReference type="GeneID" id="92894150"/>
<dbReference type="KEGG" id="abc:ACICU_02008"/>
<dbReference type="HOGENOM" id="CLU_036666_0_0_6"/>
<dbReference type="UniPathway" id="UPA00030"/>
<dbReference type="UniPathway" id="UPA00357">
    <property type="reaction ID" value="UER00474"/>
</dbReference>
<dbReference type="Proteomes" id="UP000008839">
    <property type="component" value="Chromosome"/>
</dbReference>
<dbReference type="GO" id="GO:0005737">
    <property type="term" value="C:cytoplasm"/>
    <property type="evidence" value="ECO:0007669"/>
    <property type="project" value="UniProtKB-SubCell"/>
</dbReference>
<dbReference type="GO" id="GO:0008676">
    <property type="term" value="F:3-deoxy-8-phosphooctulonate synthase activity"/>
    <property type="evidence" value="ECO:0007669"/>
    <property type="project" value="UniProtKB-UniRule"/>
</dbReference>
<dbReference type="GO" id="GO:0019294">
    <property type="term" value="P:keto-3-deoxy-D-manno-octulosonic acid biosynthetic process"/>
    <property type="evidence" value="ECO:0007669"/>
    <property type="project" value="UniProtKB-UniRule"/>
</dbReference>
<dbReference type="Gene3D" id="3.20.20.70">
    <property type="entry name" value="Aldolase class I"/>
    <property type="match status" value="1"/>
</dbReference>
<dbReference type="HAMAP" id="MF_00056">
    <property type="entry name" value="KDO8P_synth"/>
    <property type="match status" value="1"/>
</dbReference>
<dbReference type="InterPro" id="IPR013785">
    <property type="entry name" value="Aldolase_TIM"/>
</dbReference>
<dbReference type="InterPro" id="IPR006218">
    <property type="entry name" value="DAHP1/KDSA"/>
</dbReference>
<dbReference type="InterPro" id="IPR006269">
    <property type="entry name" value="KDO8P_synthase"/>
</dbReference>
<dbReference type="NCBIfam" id="TIGR01362">
    <property type="entry name" value="KDO8P_synth"/>
    <property type="match status" value="1"/>
</dbReference>
<dbReference type="NCBIfam" id="NF003543">
    <property type="entry name" value="PRK05198.1"/>
    <property type="match status" value="1"/>
</dbReference>
<dbReference type="PANTHER" id="PTHR21057">
    <property type="entry name" value="PHOSPHO-2-DEHYDRO-3-DEOXYHEPTONATE ALDOLASE"/>
    <property type="match status" value="1"/>
</dbReference>
<dbReference type="Pfam" id="PF00793">
    <property type="entry name" value="DAHP_synth_1"/>
    <property type="match status" value="1"/>
</dbReference>
<dbReference type="SUPFAM" id="SSF51569">
    <property type="entry name" value="Aldolase"/>
    <property type="match status" value="1"/>
</dbReference>
<accession>B2I2A6</accession>
<gene>
    <name evidence="1" type="primary">kdsA</name>
    <name type="ordered locus">ACICU_02008</name>
</gene>
<evidence type="ECO:0000255" key="1">
    <source>
        <dbReference type="HAMAP-Rule" id="MF_00056"/>
    </source>
</evidence>
<protein>
    <recommendedName>
        <fullName evidence="1">2-dehydro-3-deoxyphosphooctonate aldolase</fullName>
        <ecNumber evidence="1">2.5.1.55</ecNumber>
    </recommendedName>
    <alternativeName>
        <fullName evidence="1">3-deoxy-D-manno-octulosonic acid 8-phosphate synthase</fullName>
    </alternativeName>
    <alternativeName>
        <fullName evidence="1">KDO-8-phosphate synthase</fullName>
        <shortName evidence="1">KDO 8-P synthase</shortName>
        <shortName evidence="1">KDOPS</shortName>
    </alternativeName>
    <alternativeName>
        <fullName evidence="1">Phospho-2-dehydro-3-deoxyoctonate aldolase</fullName>
    </alternativeName>
</protein>
<feature type="chain" id="PRO_1000091791" description="2-dehydro-3-deoxyphosphooctonate aldolase">
    <location>
        <begin position="1"/>
        <end position="285"/>
    </location>
</feature>
<name>KDSA_ACIBC</name>
<organism>
    <name type="scientific">Acinetobacter baumannii (strain ACICU)</name>
    <dbReference type="NCBI Taxonomy" id="405416"/>
    <lineage>
        <taxon>Bacteria</taxon>
        <taxon>Pseudomonadati</taxon>
        <taxon>Pseudomonadota</taxon>
        <taxon>Gammaproteobacteria</taxon>
        <taxon>Moraxellales</taxon>
        <taxon>Moraxellaceae</taxon>
        <taxon>Acinetobacter</taxon>
        <taxon>Acinetobacter calcoaceticus/baumannii complex</taxon>
    </lineage>
</organism>
<reference key="1">
    <citation type="journal article" date="2008" name="Antimicrob. Agents Chemother.">
        <title>Whole-genome pyrosequencing of an epidemic multidrug-resistant Acinetobacter baumannii strain belonging to the European clone II group.</title>
        <authorList>
            <person name="Iacono M."/>
            <person name="Villa L."/>
            <person name="Fortini D."/>
            <person name="Bordoni R."/>
            <person name="Imperi F."/>
            <person name="Bonnal R.J."/>
            <person name="Sicheritz-Ponten T."/>
            <person name="De Bellis G."/>
            <person name="Visca P."/>
            <person name="Cassone A."/>
            <person name="Carattoli A."/>
        </authorList>
    </citation>
    <scope>NUCLEOTIDE SEQUENCE [LARGE SCALE GENOMIC DNA]</scope>
    <source>
        <strain>ACICU</strain>
    </source>
</reference>
<sequence length="285" mass="31550">MSQLKPQEVVRLGDIQMANHLPFVLFGGMNVLESKDLAFEIAETYIDICKRLDIPYVFKASFDKANRSSLHSFRGPGLEKGIEWLGDIKKHFNVPIITDVHEPYQAAPVAEVADIIQLPAFLSRQTDLVEAMAKTQAIINIKKAQFLAPHEMRHILHKCLEAGNDKLILCERGSAFGYNNLVVDMLGFDIMKEMNVPVFFDVTHALQTPGGRSDSAGGRRAQITTLARAGMATGLAGLFLESHPDPDKAKCDGPSALRLSQLEPFLAQLKELDTLVKGFKKLDTH</sequence>